<evidence type="ECO:0000250" key="1"/>
<evidence type="ECO:0000255" key="2"/>
<evidence type="ECO:0000305" key="3"/>
<reference key="1">
    <citation type="journal article" date="1999" name="Nature">
        <title>Sequence and analysis of chromosome 2 of the plant Arabidopsis thaliana.</title>
        <authorList>
            <person name="Lin X."/>
            <person name="Kaul S."/>
            <person name="Rounsley S.D."/>
            <person name="Shea T.P."/>
            <person name="Benito M.-I."/>
            <person name="Town C.D."/>
            <person name="Fujii C.Y."/>
            <person name="Mason T.M."/>
            <person name="Bowman C.L."/>
            <person name="Barnstead M.E."/>
            <person name="Feldblyum T.V."/>
            <person name="Buell C.R."/>
            <person name="Ketchum K.A."/>
            <person name="Lee J.J."/>
            <person name="Ronning C.M."/>
            <person name="Koo H.L."/>
            <person name="Moffat K.S."/>
            <person name="Cronin L.A."/>
            <person name="Shen M."/>
            <person name="Pai G."/>
            <person name="Van Aken S."/>
            <person name="Umayam L."/>
            <person name="Tallon L.J."/>
            <person name="Gill J.E."/>
            <person name="Adams M.D."/>
            <person name="Carrera A.J."/>
            <person name="Creasy T.H."/>
            <person name="Goodman H.M."/>
            <person name="Somerville C.R."/>
            <person name="Copenhaver G.P."/>
            <person name="Preuss D."/>
            <person name="Nierman W.C."/>
            <person name="White O."/>
            <person name="Eisen J.A."/>
            <person name="Salzberg S.L."/>
            <person name="Fraser C.M."/>
            <person name="Venter J.C."/>
        </authorList>
    </citation>
    <scope>NUCLEOTIDE SEQUENCE [LARGE SCALE GENOMIC DNA]</scope>
    <source>
        <strain>cv. Columbia</strain>
    </source>
</reference>
<reference key="2">
    <citation type="journal article" date="2017" name="Plant J.">
        <title>Araport11: a complete reannotation of the Arabidopsis thaliana reference genome.</title>
        <authorList>
            <person name="Cheng C.Y."/>
            <person name="Krishnakumar V."/>
            <person name="Chan A.P."/>
            <person name="Thibaud-Nissen F."/>
            <person name="Schobel S."/>
            <person name="Town C.D."/>
        </authorList>
    </citation>
    <scope>GENOME REANNOTATION</scope>
    <source>
        <strain>cv. Columbia</strain>
    </source>
</reference>
<reference key="3">
    <citation type="journal article" date="2004" name="Plant Physiol.">
        <title>Gene expression profiling of the tetrapyrrole metabolic pathway in Arabidopsis with a mini-array system.</title>
        <authorList>
            <person name="Matsumoto F."/>
            <person name="Obayashi T."/>
            <person name="Sasaki-Sekimoto Y."/>
            <person name="Ohta H."/>
            <person name="Takamiya K."/>
            <person name="Masuda T."/>
        </authorList>
    </citation>
    <scope>IDENTIFICATION</scope>
</reference>
<keyword id="KW-0149">Chlorophyll biosynthesis</keyword>
<keyword id="KW-0150">Chloroplast</keyword>
<keyword id="KW-0521">NADP</keyword>
<keyword id="KW-0560">Oxidoreductase</keyword>
<keyword id="KW-0934">Plastid</keyword>
<keyword id="KW-0627">Porphyrin biosynthesis</keyword>
<keyword id="KW-1185">Reference proteome</keyword>
<keyword id="KW-0809">Transit peptide</keyword>
<protein>
    <recommendedName>
        <fullName>Probable glutamyl-tRNA reductase 3, chloroplastic</fullName>
        <ecNumber>1.2.1.70</ecNumber>
    </recommendedName>
</protein>
<sequence>MAVSNASVVLSPNLETSSSWYHHNPSSSLDLIRIHTLPMNKMTRRGLIQRVRCETSPSSDSSPLDKLKNSPAIDRYTRERSSIVVIGLSFHTSPLEMRERLAIPEAEWPLAITQLCALNHIEEAAVLSTCNRIEIYVSALSRYRGVKEVTEWMSKRSGIPVSDICQHRFLLYNKDATQHLFQVSAGLESLVIGENQIQSQVRKAEQVVKQEGFGRIISTLFEKANKAGKRVRAQTNIASGAVSVSSAAVELALTKLPGSVSSAMMLVIGAGEMGKRIIEHLVAKGCTKMVVMNRSEDKVAAIRKEMQSGVEIIYKPLDEILACAAEANVIFTSTSSETPLFLKEHVEILPPCPADYARLFVDISVPRNVGSCVAELDSARVYNVDDLKEVVAANKEDRARKSMEALPIIREETIEFEGWRDSLQTFPTIRKLRSKTERIRAECVEKLISKHGNGMDKKTREAVEKQTRIIVNNILDYPMKHLRYDGTGSSKLRETLENMQAVNRIYELDGELLEEKIREKKDKK</sequence>
<proteinExistence type="inferred from homology"/>
<name>HEM13_ARATH</name>
<organism>
    <name type="scientific">Arabidopsis thaliana</name>
    <name type="common">Mouse-ear cress</name>
    <dbReference type="NCBI Taxonomy" id="3702"/>
    <lineage>
        <taxon>Eukaryota</taxon>
        <taxon>Viridiplantae</taxon>
        <taxon>Streptophyta</taxon>
        <taxon>Embryophyta</taxon>
        <taxon>Tracheophyta</taxon>
        <taxon>Spermatophyta</taxon>
        <taxon>Magnoliopsida</taxon>
        <taxon>eudicotyledons</taxon>
        <taxon>Gunneridae</taxon>
        <taxon>Pentapetalae</taxon>
        <taxon>rosids</taxon>
        <taxon>malvids</taxon>
        <taxon>Brassicales</taxon>
        <taxon>Brassicaceae</taxon>
        <taxon>Camelineae</taxon>
        <taxon>Arabidopsis</taxon>
    </lineage>
</organism>
<dbReference type="EC" id="1.2.1.70"/>
<dbReference type="EMBL" id="AC006593">
    <property type="protein sequence ID" value="AAD20670.1"/>
    <property type="molecule type" value="Genomic_DNA"/>
</dbReference>
<dbReference type="EMBL" id="CP002685">
    <property type="protein sequence ID" value="AEC08514.1"/>
    <property type="molecule type" value="Genomic_DNA"/>
</dbReference>
<dbReference type="PIR" id="D84718">
    <property type="entry name" value="D84718"/>
</dbReference>
<dbReference type="RefSeq" id="NP_180683.1">
    <property type="nucleotide sequence ID" value="NM_128681.3"/>
</dbReference>
<dbReference type="SMR" id="Q9SJX1"/>
<dbReference type="FunCoup" id="Q9SJX1">
    <property type="interactions" value="237"/>
</dbReference>
<dbReference type="STRING" id="3702.Q9SJX1"/>
<dbReference type="iPTMnet" id="Q9SJX1"/>
<dbReference type="PaxDb" id="3702-AT2G31250.1"/>
<dbReference type="ProteomicsDB" id="230293"/>
<dbReference type="EnsemblPlants" id="AT2G31250.1">
    <property type="protein sequence ID" value="AT2G31250.1"/>
    <property type="gene ID" value="AT2G31250"/>
</dbReference>
<dbReference type="GeneID" id="817682"/>
<dbReference type="Gramene" id="AT2G31250.1">
    <property type="protein sequence ID" value="AT2G31250.1"/>
    <property type="gene ID" value="AT2G31250"/>
</dbReference>
<dbReference type="KEGG" id="ath:AT2G31250"/>
<dbReference type="Araport" id="AT2G31250"/>
<dbReference type="TAIR" id="AT2G31250">
    <property type="gene designation" value="HEMA3"/>
</dbReference>
<dbReference type="eggNOG" id="ENOG502QQ1H">
    <property type="taxonomic scope" value="Eukaryota"/>
</dbReference>
<dbReference type="HOGENOM" id="CLU_035113_2_1_1"/>
<dbReference type="InParanoid" id="Q9SJX1"/>
<dbReference type="OMA" id="HTAPLEM"/>
<dbReference type="PhylomeDB" id="Q9SJX1"/>
<dbReference type="BioCyc" id="ARA:AT2G31250-MONOMER"/>
<dbReference type="UniPathway" id="UPA00251">
    <property type="reaction ID" value="UER00316"/>
</dbReference>
<dbReference type="UniPathway" id="UPA00668"/>
<dbReference type="PRO" id="PR:Q9SJX1"/>
<dbReference type="Proteomes" id="UP000006548">
    <property type="component" value="Chromosome 2"/>
</dbReference>
<dbReference type="ExpressionAtlas" id="Q9SJX1">
    <property type="expression patterns" value="baseline and differential"/>
</dbReference>
<dbReference type="GO" id="GO:0009507">
    <property type="term" value="C:chloroplast"/>
    <property type="evidence" value="ECO:0007669"/>
    <property type="project" value="UniProtKB-SubCell"/>
</dbReference>
<dbReference type="GO" id="GO:0008883">
    <property type="term" value="F:glutamyl-tRNA reductase activity"/>
    <property type="evidence" value="ECO:0007669"/>
    <property type="project" value="UniProtKB-EC"/>
</dbReference>
<dbReference type="GO" id="GO:0050661">
    <property type="term" value="F:NADP binding"/>
    <property type="evidence" value="ECO:0007669"/>
    <property type="project" value="InterPro"/>
</dbReference>
<dbReference type="GO" id="GO:0015995">
    <property type="term" value="P:chlorophyll biosynthetic process"/>
    <property type="evidence" value="ECO:0007669"/>
    <property type="project" value="UniProtKB-UniPathway"/>
</dbReference>
<dbReference type="GO" id="GO:0006782">
    <property type="term" value="P:protoporphyrinogen IX biosynthetic process"/>
    <property type="evidence" value="ECO:0007669"/>
    <property type="project" value="UniProtKB-UniPathway"/>
</dbReference>
<dbReference type="CDD" id="cd05213">
    <property type="entry name" value="NAD_bind_Glutamyl_tRNA_reduct"/>
    <property type="match status" value="1"/>
</dbReference>
<dbReference type="FunFam" id="3.30.460.30:FF:000001">
    <property type="entry name" value="Glutamyl-tRNA reductase"/>
    <property type="match status" value="1"/>
</dbReference>
<dbReference type="FunFam" id="3.40.50.720:FF:000031">
    <property type="entry name" value="Glutamyl-tRNA reductase"/>
    <property type="match status" value="1"/>
</dbReference>
<dbReference type="Gene3D" id="3.30.460.30">
    <property type="entry name" value="Glutamyl-tRNA reductase, N-terminal domain"/>
    <property type="match status" value="1"/>
</dbReference>
<dbReference type="Gene3D" id="3.40.50.720">
    <property type="entry name" value="NAD(P)-binding Rossmann-like Domain"/>
    <property type="match status" value="1"/>
</dbReference>
<dbReference type="HAMAP" id="MF_00087">
    <property type="entry name" value="Glu_tRNA_reductase"/>
    <property type="match status" value="1"/>
</dbReference>
<dbReference type="InterPro" id="IPR000343">
    <property type="entry name" value="4pyrrol_synth_GluRdtase"/>
</dbReference>
<dbReference type="InterPro" id="IPR015896">
    <property type="entry name" value="4pyrrol_synth_GluRdtase_dimer"/>
</dbReference>
<dbReference type="InterPro" id="IPR015895">
    <property type="entry name" value="4pyrrol_synth_GluRdtase_N"/>
</dbReference>
<dbReference type="InterPro" id="IPR018214">
    <property type="entry name" value="GluRdtase_CS"/>
</dbReference>
<dbReference type="InterPro" id="IPR036453">
    <property type="entry name" value="GluRdtase_dimer_dom_sf"/>
</dbReference>
<dbReference type="InterPro" id="IPR036343">
    <property type="entry name" value="GluRdtase_N_sf"/>
</dbReference>
<dbReference type="InterPro" id="IPR036291">
    <property type="entry name" value="NAD(P)-bd_dom_sf"/>
</dbReference>
<dbReference type="InterPro" id="IPR006151">
    <property type="entry name" value="Shikm_DH/Glu-tRNA_Rdtase"/>
</dbReference>
<dbReference type="NCBIfam" id="TIGR01035">
    <property type="entry name" value="hemA"/>
    <property type="match status" value="1"/>
</dbReference>
<dbReference type="PANTHER" id="PTHR43120">
    <property type="entry name" value="GLUTAMYL-TRNA REDUCTASE 1, CHLOROPLASTIC"/>
    <property type="match status" value="1"/>
</dbReference>
<dbReference type="PANTHER" id="PTHR43120:SF6">
    <property type="entry name" value="GLUTAMYL-TRNA REDUCTASE 3, CHLOROPLASTIC-RELATED"/>
    <property type="match status" value="1"/>
</dbReference>
<dbReference type="Pfam" id="PF00745">
    <property type="entry name" value="GlutR_dimer"/>
    <property type="match status" value="1"/>
</dbReference>
<dbReference type="Pfam" id="PF05201">
    <property type="entry name" value="GlutR_N"/>
    <property type="match status" value="1"/>
</dbReference>
<dbReference type="Pfam" id="PF01488">
    <property type="entry name" value="Shikimate_DH"/>
    <property type="match status" value="1"/>
</dbReference>
<dbReference type="SUPFAM" id="SSF69742">
    <property type="entry name" value="Glutamyl tRNA-reductase catalytic, N-terminal domain"/>
    <property type="match status" value="1"/>
</dbReference>
<dbReference type="SUPFAM" id="SSF69075">
    <property type="entry name" value="Glutamyl tRNA-reductase dimerization domain"/>
    <property type="match status" value="1"/>
</dbReference>
<dbReference type="SUPFAM" id="SSF51735">
    <property type="entry name" value="NAD(P)-binding Rossmann-fold domains"/>
    <property type="match status" value="1"/>
</dbReference>
<dbReference type="PROSITE" id="PS00747">
    <property type="entry name" value="GLUTR"/>
    <property type="match status" value="1"/>
</dbReference>
<comment type="function">
    <text evidence="1">Catalyzes the NADPH-dependent reduction of glutamyl-tRNA(Glu) to glutamate 1-semialdehyde (GSA).</text>
</comment>
<comment type="catalytic activity">
    <reaction>
        <text>(S)-4-amino-5-oxopentanoate + tRNA(Glu) + NADP(+) = L-glutamyl-tRNA(Glu) + NADPH + H(+)</text>
        <dbReference type="Rhea" id="RHEA:12344"/>
        <dbReference type="Rhea" id="RHEA-COMP:9663"/>
        <dbReference type="Rhea" id="RHEA-COMP:9680"/>
        <dbReference type="ChEBI" id="CHEBI:15378"/>
        <dbReference type="ChEBI" id="CHEBI:57501"/>
        <dbReference type="ChEBI" id="CHEBI:57783"/>
        <dbReference type="ChEBI" id="CHEBI:58349"/>
        <dbReference type="ChEBI" id="CHEBI:78442"/>
        <dbReference type="ChEBI" id="CHEBI:78520"/>
        <dbReference type="EC" id="1.2.1.70"/>
    </reaction>
</comment>
<comment type="pathway">
    <text>Porphyrin-containing compound metabolism; protoporphyrin-IX biosynthesis; 5-aminolevulinate from L-glutamyl-tRNA(Glu): step 1/2.</text>
</comment>
<comment type="pathway">
    <text>Porphyrin-containing compound metabolism; chlorophyll biosynthesis.</text>
</comment>
<comment type="subcellular location">
    <subcellularLocation>
        <location evidence="3">Plastid</location>
        <location evidence="3">Chloroplast</location>
    </subcellularLocation>
</comment>
<comment type="miscellaneous">
    <text evidence="1">During catalysis, the active site Cys acts as a nucleophile attacking the alpha-carbonyl group of tRNA-bound glutamate with the formation of a thioester intermediate between enzyme and glutamate, and the concomitant release of tRNA(Glu). The thioester intermediate is finally reduced by direct hydride transfer from NADPH, to form the product GSA (By similarity).</text>
</comment>
<comment type="similarity">
    <text evidence="3">Belongs to the glutamyl-tRNA reductase family.</text>
</comment>
<gene>
    <name type="primary">HEMA3</name>
    <name type="ordered locus">At2g31250</name>
    <name type="ORF">F16D14.9</name>
</gene>
<feature type="transit peptide" description="Chloroplast" evidence="2">
    <location>
        <begin position="1"/>
        <end position="52"/>
    </location>
</feature>
<feature type="chain" id="PRO_0000422671" description="Probable glutamyl-tRNA reductase 3, chloroplastic">
    <location>
        <begin position="53"/>
        <end position="524"/>
    </location>
</feature>
<feature type="active site" description="Nucleophile" evidence="1">
    <location>
        <position position="130"/>
    </location>
</feature>
<feature type="binding site" evidence="1">
    <location>
        <begin position="129"/>
        <end position="132"/>
    </location>
    <ligand>
        <name>substrate</name>
    </ligand>
</feature>
<feature type="binding site" evidence="1">
    <location>
        <position position="189"/>
    </location>
    <ligand>
        <name>substrate</name>
    </ligand>
</feature>
<feature type="binding site" evidence="1">
    <location>
        <begin position="194"/>
        <end position="196"/>
    </location>
    <ligand>
        <name>substrate</name>
    </ligand>
</feature>
<feature type="binding site" evidence="1">
    <location>
        <position position="200"/>
    </location>
    <ligand>
        <name>substrate</name>
    </ligand>
</feature>
<feature type="binding site" evidence="1">
    <location>
        <begin position="269"/>
        <end position="274"/>
    </location>
    <ligand>
        <name>NADP(+)</name>
        <dbReference type="ChEBI" id="CHEBI:58349"/>
    </ligand>
</feature>
<feature type="site" description="Important for activity" evidence="1">
    <location>
        <position position="179"/>
    </location>
</feature>
<accession>Q9SJX1</accession>